<accession>A0PP28</accession>
<proteinExistence type="inferred from homology"/>
<comment type="catalytic activity">
    <reaction evidence="1">
        <text>1-(2-carboxyphenylamino)-1-deoxy-D-ribulose 5-phosphate + H(+) = (1S,2R)-1-C-(indol-3-yl)glycerol 3-phosphate + CO2 + H2O</text>
        <dbReference type="Rhea" id="RHEA:23476"/>
        <dbReference type="ChEBI" id="CHEBI:15377"/>
        <dbReference type="ChEBI" id="CHEBI:15378"/>
        <dbReference type="ChEBI" id="CHEBI:16526"/>
        <dbReference type="ChEBI" id="CHEBI:58613"/>
        <dbReference type="ChEBI" id="CHEBI:58866"/>
        <dbReference type="EC" id="4.1.1.48"/>
    </reaction>
</comment>
<comment type="pathway">
    <text evidence="1">Amino-acid biosynthesis; L-tryptophan biosynthesis; L-tryptophan from chorismate: step 4/5.</text>
</comment>
<comment type="similarity">
    <text evidence="1">Belongs to the TrpC family.</text>
</comment>
<dbReference type="EC" id="4.1.1.48" evidence="1"/>
<dbReference type="EMBL" id="CP000325">
    <property type="protein sequence ID" value="ABL04097.1"/>
    <property type="molecule type" value="Genomic_DNA"/>
</dbReference>
<dbReference type="RefSeq" id="WP_011739717.1">
    <property type="nucleotide sequence ID" value="NC_008611.1"/>
</dbReference>
<dbReference type="SMR" id="A0PP28"/>
<dbReference type="GeneID" id="93437364"/>
<dbReference type="KEGG" id="mul:MUL_1591"/>
<dbReference type="eggNOG" id="COG0134">
    <property type="taxonomic scope" value="Bacteria"/>
</dbReference>
<dbReference type="HOGENOM" id="CLU_034247_0_0_11"/>
<dbReference type="UniPathway" id="UPA00035">
    <property type="reaction ID" value="UER00043"/>
</dbReference>
<dbReference type="Proteomes" id="UP000000765">
    <property type="component" value="Chromosome"/>
</dbReference>
<dbReference type="GO" id="GO:0004425">
    <property type="term" value="F:indole-3-glycerol-phosphate synthase activity"/>
    <property type="evidence" value="ECO:0007669"/>
    <property type="project" value="UniProtKB-UniRule"/>
</dbReference>
<dbReference type="GO" id="GO:0004640">
    <property type="term" value="F:phosphoribosylanthranilate isomerase activity"/>
    <property type="evidence" value="ECO:0007669"/>
    <property type="project" value="TreeGrafter"/>
</dbReference>
<dbReference type="GO" id="GO:0000162">
    <property type="term" value="P:L-tryptophan biosynthetic process"/>
    <property type="evidence" value="ECO:0007669"/>
    <property type="project" value="UniProtKB-UniRule"/>
</dbReference>
<dbReference type="CDD" id="cd00331">
    <property type="entry name" value="IGPS"/>
    <property type="match status" value="1"/>
</dbReference>
<dbReference type="FunFam" id="3.20.20.70:FF:000024">
    <property type="entry name" value="Indole-3-glycerol phosphate synthase"/>
    <property type="match status" value="1"/>
</dbReference>
<dbReference type="Gene3D" id="3.20.20.70">
    <property type="entry name" value="Aldolase class I"/>
    <property type="match status" value="1"/>
</dbReference>
<dbReference type="HAMAP" id="MF_00134_B">
    <property type="entry name" value="IGPS_B"/>
    <property type="match status" value="1"/>
</dbReference>
<dbReference type="InterPro" id="IPR013785">
    <property type="entry name" value="Aldolase_TIM"/>
</dbReference>
<dbReference type="InterPro" id="IPR045186">
    <property type="entry name" value="Indole-3-glycerol_P_synth"/>
</dbReference>
<dbReference type="InterPro" id="IPR013798">
    <property type="entry name" value="Indole-3-glycerol_P_synth_dom"/>
</dbReference>
<dbReference type="InterPro" id="IPR001468">
    <property type="entry name" value="Indole-3-GlycerolPSynthase_CS"/>
</dbReference>
<dbReference type="InterPro" id="IPR011060">
    <property type="entry name" value="RibuloseP-bd_barrel"/>
</dbReference>
<dbReference type="NCBIfam" id="NF001369">
    <property type="entry name" value="PRK00278.1-1"/>
    <property type="match status" value="1"/>
</dbReference>
<dbReference type="NCBIfam" id="NF001377">
    <property type="entry name" value="PRK00278.2-4"/>
    <property type="match status" value="1"/>
</dbReference>
<dbReference type="PANTHER" id="PTHR22854:SF2">
    <property type="entry name" value="INDOLE-3-GLYCEROL-PHOSPHATE SYNTHASE"/>
    <property type="match status" value="1"/>
</dbReference>
<dbReference type="PANTHER" id="PTHR22854">
    <property type="entry name" value="TRYPTOPHAN BIOSYNTHESIS PROTEIN"/>
    <property type="match status" value="1"/>
</dbReference>
<dbReference type="Pfam" id="PF00218">
    <property type="entry name" value="IGPS"/>
    <property type="match status" value="1"/>
</dbReference>
<dbReference type="SUPFAM" id="SSF51366">
    <property type="entry name" value="Ribulose-phoshate binding barrel"/>
    <property type="match status" value="1"/>
</dbReference>
<dbReference type="PROSITE" id="PS00614">
    <property type="entry name" value="IGPS"/>
    <property type="match status" value="1"/>
</dbReference>
<keyword id="KW-0028">Amino-acid biosynthesis</keyword>
<keyword id="KW-0057">Aromatic amino acid biosynthesis</keyword>
<keyword id="KW-0210">Decarboxylase</keyword>
<keyword id="KW-0456">Lyase</keyword>
<keyword id="KW-0822">Tryptophan biosynthesis</keyword>
<sequence>MSPATVLDSILEGVRADVAAREALVGMTEIKAAAAAAPPPLDVMAALRQPGIGVIAEVKRASPSAGSLAPITDPAKLARAYEDGGARIISVLTEGRRFQGSLDDLDAVRAAVSIPLLRKDFVVQPYQIHEARAHGADMLLLIVAALDQSALVSMLDRTESLGMTALVEVHTEQEADRALKAGAKVIGVNARDLTTLEVDRDCFARIASGLPSNVIRIAESGVRGTNDLLAYAGAGADAVLVGEGLVKSGDPRAAVADLVTAGTHPSCPKPAR</sequence>
<evidence type="ECO:0000255" key="1">
    <source>
        <dbReference type="HAMAP-Rule" id="MF_00134"/>
    </source>
</evidence>
<organism>
    <name type="scientific">Mycobacterium ulcerans (strain Agy99)</name>
    <dbReference type="NCBI Taxonomy" id="362242"/>
    <lineage>
        <taxon>Bacteria</taxon>
        <taxon>Bacillati</taxon>
        <taxon>Actinomycetota</taxon>
        <taxon>Actinomycetes</taxon>
        <taxon>Mycobacteriales</taxon>
        <taxon>Mycobacteriaceae</taxon>
        <taxon>Mycobacterium</taxon>
        <taxon>Mycobacterium ulcerans group</taxon>
    </lineage>
</organism>
<name>TRPC_MYCUA</name>
<reference key="1">
    <citation type="journal article" date="2007" name="Genome Res.">
        <title>Reductive evolution and niche adaptation inferred from the genome of Mycobacterium ulcerans, the causative agent of Buruli ulcer.</title>
        <authorList>
            <person name="Stinear T.P."/>
            <person name="Seemann T."/>
            <person name="Pidot S."/>
            <person name="Frigui W."/>
            <person name="Reysset G."/>
            <person name="Garnier T."/>
            <person name="Meurice G."/>
            <person name="Simon D."/>
            <person name="Bouchier C."/>
            <person name="Ma L."/>
            <person name="Tichit M."/>
            <person name="Porter J.L."/>
            <person name="Ryan J."/>
            <person name="Johnson P.D.R."/>
            <person name="Davies J.K."/>
            <person name="Jenkin G.A."/>
            <person name="Small P.L.C."/>
            <person name="Jones L.M."/>
            <person name="Tekaia F."/>
            <person name="Laval F."/>
            <person name="Daffe M."/>
            <person name="Parkhill J."/>
            <person name="Cole S.T."/>
        </authorList>
    </citation>
    <scope>NUCLEOTIDE SEQUENCE [LARGE SCALE GENOMIC DNA]</scope>
    <source>
        <strain>Agy99</strain>
    </source>
</reference>
<feature type="chain" id="PRO_1000018506" description="Indole-3-glycerol phosphate synthase">
    <location>
        <begin position="1"/>
        <end position="272"/>
    </location>
</feature>
<protein>
    <recommendedName>
        <fullName evidence="1">Indole-3-glycerol phosphate synthase</fullName>
        <shortName evidence="1">IGPS</shortName>
        <ecNumber evidence="1">4.1.1.48</ecNumber>
    </recommendedName>
</protein>
<gene>
    <name evidence="1" type="primary">trpC</name>
    <name type="ordered locus">MUL_1591</name>
</gene>